<proteinExistence type="inferred from homology"/>
<evidence type="ECO:0000255" key="1">
    <source>
        <dbReference type="HAMAP-Rule" id="MF_00636"/>
    </source>
</evidence>
<evidence type="ECO:0000305" key="2"/>
<keyword id="KW-0067">ATP-binding</keyword>
<keyword id="KW-0342">GTP-binding</keyword>
<keyword id="KW-0547">Nucleotide-binding</keyword>
<sequence length="302" mass="33693">MRIVLITGISGSGKSVALNALEDAGYYCVDNLPPHVLPELARYLADGGQHRLAVAIDARSSASLDELPGLIRSLSLEHDVRVLFLNASTQALIQRFSETRRRHPLSGSPSHDANIGLLSSLEEAIERERDLVAPLAEFGHQIDTSTLRANVLRTWVKRFIEQKNNDLMVMFESFGFKRGVPLDADLMFDVRALPNPYYDHELRPLTGLDQPVIAFLDALPIVHQMIDDIHAFLMKWLPHFREDNRSYLTVAIGCTGGQHRSVFIAETLAARLAHDANVIVRHRDAPVDVDASSRLVTEVDRP</sequence>
<gene>
    <name type="ordered locus">Bamb_2855</name>
</gene>
<accession>Q0BBR2</accession>
<protein>
    <recommendedName>
        <fullName evidence="1">Nucleotide-binding protein Bamb_2855</fullName>
    </recommendedName>
</protein>
<feature type="chain" id="PRO_0000383222" description="Nucleotide-binding protein Bamb_2855">
    <location>
        <begin position="1"/>
        <end position="302"/>
    </location>
</feature>
<feature type="binding site" evidence="1">
    <location>
        <begin position="8"/>
        <end position="15"/>
    </location>
    <ligand>
        <name>ATP</name>
        <dbReference type="ChEBI" id="CHEBI:30616"/>
    </ligand>
</feature>
<feature type="binding site" evidence="1">
    <location>
        <begin position="57"/>
        <end position="60"/>
    </location>
    <ligand>
        <name>GTP</name>
        <dbReference type="ChEBI" id="CHEBI:37565"/>
    </ligand>
</feature>
<name>Y2855_BURCM</name>
<reference key="1">
    <citation type="submission" date="2006-08" db="EMBL/GenBank/DDBJ databases">
        <title>Complete sequence of chromosome 1 of Burkholderia cepacia AMMD.</title>
        <authorList>
            <person name="Copeland A."/>
            <person name="Lucas S."/>
            <person name="Lapidus A."/>
            <person name="Barry K."/>
            <person name="Detter J.C."/>
            <person name="Glavina del Rio T."/>
            <person name="Hammon N."/>
            <person name="Israni S."/>
            <person name="Pitluck S."/>
            <person name="Bruce D."/>
            <person name="Chain P."/>
            <person name="Malfatti S."/>
            <person name="Shin M."/>
            <person name="Vergez L."/>
            <person name="Schmutz J."/>
            <person name="Larimer F."/>
            <person name="Land M."/>
            <person name="Hauser L."/>
            <person name="Kyrpides N."/>
            <person name="Kim E."/>
            <person name="Parke J."/>
            <person name="Coenye T."/>
            <person name="Konstantinidis K."/>
            <person name="Ramette A."/>
            <person name="Tiedje J."/>
            <person name="Richardson P."/>
        </authorList>
    </citation>
    <scope>NUCLEOTIDE SEQUENCE [LARGE SCALE GENOMIC DNA]</scope>
    <source>
        <strain>ATCC BAA-244 / DSM 16087 / CCUG 44356 / LMG 19182 / AMMD</strain>
    </source>
</reference>
<dbReference type="EMBL" id="CP000440">
    <property type="protein sequence ID" value="ABI88411.1"/>
    <property type="status" value="ALT_INIT"/>
    <property type="molecule type" value="Genomic_DNA"/>
</dbReference>
<dbReference type="SMR" id="Q0BBR2"/>
<dbReference type="KEGG" id="bam:Bamb_2855"/>
<dbReference type="PATRIC" id="fig|339670.21.peg.2032"/>
<dbReference type="eggNOG" id="COG1660">
    <property type="taxonomic scope" value="Bacteria"/>
</dbReference>
<dbReference type="Proteomes" id="UP000000662">
    <property type="component" value="Chromosome 1"/>
</dbReference>
<dbReference type="GO" id="GO:0005524">
    <property type="term" value="F:ATP binding"/>
    <property type="evidence" value="ECO:0007669"/>
    <property type="project" value="UniProtKB-UniRule"/>
</dbReference>
<dbReference type="GO" id="GO:0005525">
    <property type="term" value="F:GTP binding"/>
    <property type="evidence" value="ECO:0007669"/>
    <property type="project" value="UniProtKB-UniRule"/>
</dbReference>
<dbReference type="Gene3D" id="3.40.50.300">
    <property type="entry name" value="P-loop containing nucleotide triphosphate hydrolases"/>
    <property type="match status" value="1"/>
</dbReference>
<dbReference type="HAMAP" id="MF_00636">
    <property type="entry name" value="RapZ_like"/>
    <property type="match status" value="1"/>
</dbReference>
<dbReference type="InterPro" id="IPR027417">
    <property type="entry name" value="P-loop_NTPase"/>
</dbReference>
<dbReference type="InterPro" id="IPR005337">
    <property type="entry name" value="RapZ-like"/>
</dbReference>
<dbReference type="InterPro" id="IPR053930">
    <property type="entry name" value="RapZ-like_N"/>
</dbReference>
<dbReference type="InterPro" id="IPR053931">
    <property type="entry name" value="RapZ_C"/>
</dbReference>
<dbReference type="NCBIfam" id="NF003828">
    <property type="entry name" value="PRK05416.1"/>
    <property type="match status" value="1"/>
</dbReference>
<dbReference type="PANTHER" id="PTHR30448">
    <property type="entry name" value="RNASE ADAPTER PROTEIN RAPZ"/>
    <property type="match status" value="1"/>
</dbReference>
<dbReference type="PANTHER" id="PTHR30448:SF0">
    <property type="entry name" value="RNASE ADAPTER PROTEIN RAPZ"/>
    <property type="match status" value="1"/>
</dbReference>
<dbReference type="Pfam" id="PF22740">
    <property type="entry name" value="PapZ_C"/>
    <property type="match status" value="1"/>
</dbReference>
<dbReference type="Pfam" id="PF03668">
    <property type="entry name" value="RapZ-like_N"/>
    <property type="match status" value="1"/>
</dbReference>
<dbReference type="PIRSF" id="PIRSF005052">
    <property type="entry name" value="P-loopkin"/>
    <property type="match status" value="1"/>
</dbReference>
<dbReference type="SUPFAM" id="SSF52540">
    <property type="entry name" value="P-loop containing nucleoside triphosphate hydrolases"/>
    <property type="match status" value="1"/>
</dbReference>
<organism>
    <name type="scientific">Burkholderia ambifaria (strain ATCC BAA-244 / DSM 16087 / CCUG 44356 / LMG 19182 / AMMD)</name>
    <name type="common">Burkholderia cepacia (strain AMMD)</name>
    <dbReference type="NCBI Taxonomy" id="339670"/>
    <lineage>
        <taxon>Bacteria</taxon>
        <taxon>Pseudomonadati</taxon>
        <taxon>Pseudomonadota</taxon>
        <taxon>Betaproteobacteria</taxon>
        <taxon>Burkholderiales</taxon>
        <taxon>Burkholderiaceae</taxon>
        <taxon>Burkholderia</taxon>
        <taxon>Burkholderia cepacia complex</taxon>
    </lineage>
</organism>
<comment type="function">
    <text evidence="1">Displays ATPase and GTPase activities.</text>
</comment>
<comment type="similarity">
    <text evidence="1">Belongs to the RapZ-like family.</text>
</comment>
<comment type="sequence caution" evidence="2">
    <conflict type="erroneous initiation">
        <sequence resource="EMBL-CDS" id="ABI88411"/>
    </conflict>
</comment>